<organism>
    <name type="scientific">Candida albicans (strain SC5314 / ATCC MYA-2876)</name>
    <name type="common">Yeast</name>
    <dbReference type="NCBI Taxonomy" id="237561"/>
    <lineage>
        <taxon>Eukaryota</taxon>
        <taxon>Fungi</taxon>
        <taxon>Dikarya</taxon>
        <taxon>Ascomycota</taxon>
        <taxon>Saccharomycotina</taxon>
        <taxon>Pichiomycetes</taxon>
        <taxon>Debaryomycetaceae</taxon>
        <taxon>Candida/Lodderomyces clade</taxon>
        <taxon>Candida</taxon>
    </lineage>
</organism>
<dbReference type="EC" id="2.8.1.8" evidence="1"/>
<dbReference type="EMBL" id="CP017626">
    <property type="protein sequence ID" value="AOW29000.1"/>
    <property type="molecule type" value="Genomic_DNA"/>
</dbReference>
<dbReference type="RefSeq" id="XP_720524.1">
    <property type="nucleotide sequence ID" value="XM_715431.2"/>
</dbReference>
<dbReference type="SMR" id="P0CH67"/>
<dbReference type="FunCoup" id="P0CH67">
    <property type="interactions" value="613"/>
</dbReference>
<dbReference type="STRING" id="237561.P0CH67"/>
<dbReference type="EnsemblFungi" id="C4_02290W_A-T">
    <property type="protein sequence ID" value="C4_02290W_A-T-p1"/>
    <property type="gene ID" value="C4_02290W_A"/>
</dbReference>
<dbReference type="GeneID" id="3637893"/>
<dbReference type="KEGG" id="cal:CAALFM_C402290WA"/>
<dbReference type="CGD" id="CAL0000198437">
    <property type="gene designation" value="LAB5"/>
</dbReference>
<dbReference type="VEuPathDB" id="FungiDB:C4_02290W_A"/>
<dbReference type="eggNOG" id="KOG2672">
    <property type="taxonomic scope" value="Eukaryota"/>
</dbReference>
<dbReference type="HOGENOM" id="CLU_033144_2_0_1"/>
<dbReference type="InParanoid" id="P0CH67"/>
<dbReference type="OMA" id="PYCDIDF"/>
<dbReference type="OrthoDB" id="3231at2759"/>
<dbReference type="UniPathway" id="UPA00538">
    <property type="reaction ID" value="UER00593"/>
</dbReference>
<dbReference type="PRO" id="PR:P0CH67"/>
<dbReference type="Proteomes" id="UP000000559">
    <property type="component" value="Chromosome 4"/>
</dbReference>
<dbReference type="GO" id="GO:0005739">
    <property type="term" value="C:mitochondrion"/>
    <property type="evidence" value="ECO:0000318"/>
    <property type="project" value="GO_Central"/>
</dbReference>
<dbReference type="GO" id="GO:0051539">
    <property type="term" value="F:4 iron, 4 sulfur cluster binding"/>
    <property type="evidence" value="ECO:0007669"/>
    <property type="project" value="UniProtKB-UniRule"/>
</dbReference>
<dbReference type="GO" id="GO:0016992">
    <property type="term" value="F:lipoate synthase activity"/>
    <property type="evidence" value="ECO:0000318"/>
    <property type="project" value="GO_Central"/>
</dbReference>
<dbReference type="GO" id="GO:0046872">
    <property type="term" value="F:metal ion binding"/>
    <property type="evidence" value="ECO:0007669"/>
    <property type="project" value="UniProtKB-KW"/>
</dbReference>
<dbReference type="GO" id="GO:0009107">
    <property type="term" value="P:lipoate biosynthetic process"/>
    <property type="evidence" value="ECO:0000318"/>
    <property type="project" value="GO_Central"/>
</dbReference>
<dbReference type="CDD" id="cd01335">
    <property type="entry name" value="Radical_SAM"/>
    <property type="match status" value="1"/>
</dbReference>
<dbReference type="FunFam" id="3.20.20.70:FF:000036">
    <property type="entry name" value="Lipoyl synthase, mitochondrial"/>
    <property type="match status" value="1"/>
</dbReference>
<dbReference type="Gene3D" id="3.20.20.70">
    <property type="entry name" value="Aldolase class I"/>
    <property type="match status" value="1"/>
</dbReference>
<dbReference type="HAMAP" id="MF_00206">
    <property type="entry name" value="Lipoyl_synth"/>
    <property type="match status" value="1"/>
</dbReference>
<dbReference type="InterPro" id="IPR013785">
    <property type="entry name" value="Aldolase_TIM"/>
</dbReference>
<dbReference type="InterPro" id="IPR006638">
    <property type="entry name" value="Elp3/MiaA/NifB-like_rSAM"/>
</dbReference>
<dbReference type="InterPro" id="IPR031691">
    <property type="entry name" value="LIAS_N"/>
</dbReference>
<dbReference type="InterPro" id="IPR003698">
    <property type="entry name" value="Lipoyl_synth"/>
</dbReference>
<dbReference type="InterPro" id="IPR007197">
    <property type="entry name" value="rSAM"/>
</dbReference>
<dbReference type="NCBIfam" id="TIGR00510">
    <property type="entry name" value="lipA"/>
    <property type="match status" value="1"/>
</dbReference>
<dbReference type="NCBIfam" id="NF004019">
    <property type="entry name" value="PRK05481.1"/>
    <property type="match status" value="1"/>
</dbReference>
<dbReference type="NCBIfam" id="NF009544">
    <property type="entry name" value="PRK12928.1"/>
    <property type="match status" value="1"/>
</dbReference>
<dbReference type="PANTHER" id="PTHR10949">
    <property type="entry name" value="LIPOYL SYNTHASE"/>
    <property type="match status" value="1"/>
</dbReference>
<dbReference type="PANTHER" id="PTHR10949:SF0">
    <property type="entry name" value="LIPOYL SYNTHASE, MITOCHONDRIAL"/>
    <property type="match status" value="1"/>
</dbReference>
<dbReference type="Pfam" id="PF16881">
    <property type="entry name" value="LIAS_N"/>
    <property type="match status" value="1"/>
</dbReference>
<dbReference type="Pfam" id="PF04055">
    <property type="entry name" value="Radical_SAM"/>
    <property type="match status" value="1"/>
</dbReference>
<dbReference type="PIRSF" id="PIRSF005963">
    <property type="entry name" value="Lipoyl_synth"/>
    <property type="match status" value="1"/>
</dbReference>
<dbReference type="SFLD" id="SFLDF00271">
    <property type="entry name" value="lipoyl_synthase"/>
    <property type="match status" value="1"/>
</dbReference>
<dbReference type="SFLD" id="SFLDG01058">
    <property type="entry name" value="lipoyl_synthase_like"/>
    <property type="match status" value="1"/>
</dbReference>
<dbReference type="SMART" id="SM00729">
    <property type="entry name" value="Elp3"/>
    <property type="match status" value="1"/>
</dbReference>
<dbReference type="SUPFAM" id="SSF102114">
    <property type="entry name" value="Radical SAM enzymes"/>
    <property type="match status" value="1"/>
</dbReference>
<dbReference type="PROSITE" id="PS51918">
    <property type="entry name" value="RADICAL_SAM"/>
    <property type="match status" value="1"/>
</dbReference>
<proteinExistence type="inferred from homology"/>
<gene>
    <name type="primary">LAB5</name>
    <name type="synonym">LIS1</name>
    <name type="ordered locus">CAALFM_C402290WA</name>
    <name type="ORF">CaO19.10290</name>
    <name type="ORF">CaO19.2774</name>
</gene>
<feature type="transit peptide" description="Mitochondrion" evidence="1">
    <location>
        <begin position="1"/>
        <end position="21"/>
    </location>
</feature>
<feature type="chain" id="PRO_0000398258" description="Lipoyl synthase, mitochondrial">
    <location>
        <begin position="22"/>
        <end position="386"/>
    </location>
</feature>
<feature type="domain" description="Radical SAM core" evidence="2">
    <location>
        <begin position="122"/>
        <end position="341"/>
    </location>
</feature>
<feature type="binding site" evidence="1">
    <location>
        <position position="107"/>
    </location>
    <ligand>
        <name>[4Fe-4S] cluster</name>
        <dbReference type="ChEBI" id="CHEBI:49883"/>
        <label>1</label>
    </ligand>
</feature>
<feature type="binding site" evidence="1">
    <location>
        <position position="112"/>
    </location>
    <ligand>
        <name>[4Fe-4S] cluster</name>
        <dbReference type="ChEBI" id="CHEBI:49883"/>
        <label>1</label>
    </ligand>
</feature>
<feature type="binding site" evidence="1">
    <location>
        <position position="118"/>
    </location>
    <ligand>
        <name>[4Fe-4S] cluster</name>
        <dbReference type="ChEBI" id="CHEBI:49883"/>
        <label>1</label>
    </ligand>
</feature>
<feature type="binding site" evidence="1">
    <location>
        <position position="137"/>
    </location>
    <ligand>
        <name>[4Fe-4S] cluster</name>
        <dbReference type="ChEBI" id="CHEBI:49883"/>
        <label>2</label>
        <note>4Fe-4S-S-AdoMet</note>
    </ligand>
</feature>
<feature type="binding site" evidence="1">
    <location>
        <position position="141"/>
    </location>
    <ligand>
        <name>[4Fe-4S] cluster</name>
        <dbReference type="ChEBI" id="CHEBI:49883"/>
        <label>2</label>
        <note>4Fe-4S-S-AdoMet</note>
    </ligand>
</feature>
<feature type="binding site" evidence="1">
    <location>
        <position position="144"/>
    </location>
    <ligand>
        <name>[4Fe-4S] cluster</name>
        <dbReference type="ChEBI" id="CHEBI:49883"/>
        <label>2</label>
        <note>4Fe-4S-S-AdoMet</note>
    </ligand>
</feature>
<feature type="binding site" evidence="1">
    <location>
        <position position="352"/>
    </location>
    <ligand>
        <name>[4Fe-4S] cluster</name>
        <dbReference type="ChEBI" id="CHEBI:49883"/>
        <label>1</label>
    </ligand>
</feature>
<evidence type="ECO:0000255" key="1">
    <source>
        <dbReference type="HAMAP-Rule" id="MF_03123"/>
    </source>
</evidence>
<evidence type="ECO:0000255" key="2">
    <source>
        <dbReference type="PROSITE-ProRule" id="PRU01266"/>
    </source>
</evidence>
<name>LIPA_CANAL</name>
<keyword id="KW-0004">4Fe-4S</keyword>
<keyword id="KW-0408">Iron</keyword>
<keyword id="KW-0411">Iron-sulfur</keyword>
<keyword id="KW-0479">Metal-binding</keyword>
<keyword id="KW-0496">Mitochondrion</keyword>
<keyword id="KW-1185">Reference proteome</keyword>
<keyword id="KW-0949">S-adenosyl-L-methionine</keyword>
<keyword id="KW-0808">Transferase</keyword>
<keyword id="KW-0809">Transit peptide</keyword>
<protein>
    <recommendedName>
        <fullName evidence="1">Lipoyl synthase, mitochondrial</fullName>
        <ecNumber evidence="1">2.8.1.8</ecNumber>
    </recommendedName>
    <alternativeName>
        <fullName evidence="1">Lipoate synthase</fullName>
        <shortName evidence="1">LS</shortName>
        <shortName evidence="1">Lip-syn</shortName>
    </alternativeName>
    <alternativeName>
        <fullName evidence="1">Lipoic acid synthase</fullName>
    </alternativeName>
</protein>
<comment type="function">
    <text evidence="1">Catalyzes the radical-mediated insertion of two sulfur atoms into the C-6 and C-8 positions of the octanoyl moiety bound to the lipoyl domains of lipoate-dependent enzymes, thereby converting the octanoylated domains into lipoylated derivatives.</text>
</comment>
<comment type="catalytic activity">
    <reaction evidence="1">
        <text>[[Fe-S] cluster scaffold protein carrying a second [4Fe-4S](2+) cluster] + N(6)-octanoyl-L-lysyl-[protein] + 2 oxidized [2Fe-2S]-[ferredoxin] + 2 S-adenosyl-L-methionine + 4 H(+) = [[Fe-S] cluster scaffold protein] + N(6)-[(R)-dihydrolipoyl]-L-lysyl-[protein] + 4 Fe(3+) + 2 hydrogen sulfide + 2 5'-deoxyadenosine + 2 L-methionine + 2 reduced [2Fe-2S]-[ferredoxin]</text>
        <dbReference type="Rhea" id="RHEA:16585"/>
        <dbReference type="Rhea" id="RHEA-COMP:9928"/>
        <dbReference type="Rhea" id="RHEA-COMP:10000"/>
        <dbReference type="Rhea" id="RHEA-COMP:10001"/>
        <dbReference type="Rhea" id="RHEA-COMP:10475"/>
        <dbReference type="Rhea" id="RHEA-COMP:14568"/>
        <dbReference type="Rhea" id="RHEA-COMP:14569"/>
        <dbReference type="ChEBI" id="CHEBI:15378"/>
        <dbReference type="ChEBI" id="CHEBI:17319"/>
        <dbReference type="ChEBI" id="CHEBI:29034"/>
        <dbReference type="ChEBI" id="CHEBI:29919"/>
        <dbReference type="ChEBI" id="CHEBI:33722"/>
        <dbReference type="ChEBI" id="CHEBI:33737"/>
        <dbReference type="ChEBI" id="CHEBI:33738"/>
        <dbReference type="ChEBI" id="CHEBI:57844"/>
        <dbReference type="ChEBI" id="CHEBI:59789"/>
        <dbReference type="ChEBI" id="CHEBI:78809"/>
        <dbReference type="ChEBI" id="CHEBI:83100"/>
        <dbReference type="EC" id="2.8.1.8"/>
    </reaction>
</comment>
<comment type="cofactor">
    <cofactor evidence="1">
        <name>[4Fe-4S] cluster</name>
        <dbReference type="ChEBI" id="CHEBI:49883"/>
    </cofactor>
    <text evidence="1">Binds 2 [4Fe-4S] clusters per subunit. One cluster is coordinated with 3 cysteines and an exchangeable S-adenosyl-L-methionine.</text>
</comment>
<comment type="pathway">
    <text evidence="1">Protein modification; protein lipoylation via endogenous pathway; protein N(6)-(lipoyl)lysine from octanoyl-[acyl-carrier-protein]: step 2/2.</text>
</comment>
<comment type="subcellular location">
    <subcellularLocation>
        <location evidence="1">Mitochondrion</location>
    </subcellularLocation>
</comment>
<comment type="similarity">
    <text evidence="1">Belongs to the radical SAM superfamily. Lipoyl synthase family.</text>
</comment>
<sequence length="386" mass="43339">MISRNSILLRRLYPTTIIRTLATDATESTSVKTKRRRTIFTDELNKGPSFDDFVSGKAKDMLEDPLETARKDPNAKLPSWLKVPIPKGKSFHNVKKDVRELKLATVCEEAKCPNIGECWGGKKSEATATIMLLGDTCTRGCRFCSVKTNRKPAAPDPMEPENTAEAISRWGLGYVVLTTVDRDDLVDGGARHLAETVQKIKQKAPQILVEVLGGDFRGDLSMVEILADSGLDVYAHNLETVEALTPHIRDRRATYRQSLAVLERAKQTNSSLITKTSLMLGFGETDDQVLQTLRDLREIGCDVVTFGQYMRPTKRHMKVVEYIKPEKFDYWRDTALDMGFLYVASGPLVRSSYKAGEAFIENVLKKRKHNVGETPRLAQEIKPSIY</sequence>
<accession>P0CH67</accession>
<accession>A0A1D8PLI9</accession>
<accession>Q5AF33</accession>
<reference key="1">
    <citation type="journal article" date="2004" name="Proc. Natl. Acad. Sci. U.S.A.">
        <title>The diploid genome sequence of Candida albicans.</title>
        <authorList>
            <person name="Jones T."/>
            <person name="Federspiel N.A."/>
            <person name="Chibana H."/>
            <person name="Dungan J."/>
            <person name="Kalman S."/>
            <person name="Magee B.B."/>
            <person name="Newport G."/>
            <person name="Thorstenson Y.R."/>
            <person name="Agabian N."/>
            <person name="Magee P.T."/>
            <person name="Davis R.W."/>
            <person name="Scherer S."/>
        </authorList>
    </citation>
    <scope>NUCLEOTIDE SEQUENCE [LARGE SCALE GENOMIC DNA]</scope>
    <source>
        <strain>SC5314 / ATCC MYA-2876</strain>
    </source>
</reference>
<reference key="2">
    <citation type="journal article" date="2007" name="Genome Biol.">
        <title>Assembly of the Candida albicans genome into sixteen supercontigs aligned on the eight chromosomes.</title>
        <authorList>
            <person name="van het Hoog M."/>
            <person name="Rast T.J."/>
            <person name="Martchenko M."/>
            <person name="Grindle S."/>
            <person name="Dignard D."/>
            <person name="Hogues H."/>
            <person name="Cuomo C."/>
            <person name="Berriman M."/>
            <person name="Scherer S."/>
            <person name="Magee B.B."/>
            <person name="Whiteway M."/>
            <person name="Chibana H."/>
            <person name="Nantel A."/>
            <person name="Magee P.T."/>
        </authorList>
    </citation>
    <scope>GENOME REANNOTATION</scope>
    <source>
        <strain>SC5314 / ATCC MYA-2876</strain>
    </source>
</reference>
<reference key="3">
    <citation type="journal article" date="2013" name="Genome Biol.">
        <title>Assembly of a phased diploid Candida albicans genome facilitates allele-specific measurements and provides a simple model for repeat and indel structure.</title>
        <authorList>
            <person name="Muzzey D."/>
            <person name="Schwartz K."/>
            <person name="Weissman J.S."/>
            <person name="Sherlock G."/>
        </authorList>
    </citation>
    <scope>NUCLEOTIDE SEQUENCE [LARGE SCALE GENOMIC DNA]</scope>
    <scope>GENOME REANNOTATION</scope>
    <source>
        <strain>SC5314 / ATCC MYA-2876</strain>
    </source>
</reference>